<sequence>MQDFWQAAAAQLERELTPQQFKTWIKPLAPVAFDEEAHALRIAAPNRFKLDWVKSQFSGRITALACEYWETQVSVHFVLDPAASGRAAAYTQQAMQQGQDAPAAMGTAMGAGHAPYPGMAGMAGGQSYGPAGAQVPGAHPNQMAGYPDYPSQSNGAPAGYGGAAGGQTPYSQSQQSAQGRGAAPTGHPLQGNSAAHLPDMGEIDVAQMDPAEASARSYRVPSPQPAAPAGAQQQSDTVHERSRLNPILTFDNFVTGKANQLARAAAIQVANNPGKSYNPLYLYGGVGLGKTHLIHAIGNFMLMENPRARIRYIHAEQYVSDVVKAYQRKAFDEFKRYYHSLDLLLIDDIQFFSGKNRTQEEFFYAFEALIANRAQVIITSDTYPKEITGIDDRLISRFDSGLTVAIEPPELEMRVAILMKKAAAENVSVPEEVAFFVAKHLRSNVRELEGALRKILAFSNFHGKDITIDVTREALKDLLTVQNRQISVENIQKTCADFYNIKVADMYSKKRPANIARPRQIAMYLAKELTQKSLPEIGELFGGRDHTTVLHAVRKIAEERSKDAQLNHELHVLEQTLKG</sequence>
<name>DNAA_CUPMC</name>
<accession>Q1LSI9</accession>
<keyword id="KW-0067">ATP-binding</keyword>
<keyword id="KW-0963">Cytoplasm</keyword>
<keyword id="KW-0235">DNA replication</keyword>
<keyword id="KW-0238">DNA-binding</keyword>
<keyword id="KW-0446">Lipid-binding</keyword>
<keyword id="KW-0547">Nucleotide-binding</keyword>
<keyword id="KW-1185">Reference proteome</keyword>
<comment type="function">
    <text evidence="1">Plays an essential role in the initiation and regulation of chromosomal replication. ATP-DnaA binds to the origin of replication (oriC) to initiate formation of the DNA replication initiation complex once per cell cycle. Binds the DnaA box (a 9 base pair repeat at the origin) and separates the double-stranded (ds)DNA. Forms a right-handed helical filament on oriC DNA; dsDNA binds to the exterior of the filament while single-stranded (ss)DNA is stabiized in the filament's interior. The ATP-DnaA-oriC complex binds and stabilizes one strand of the AT-rich DNA unwinding element (DUE), permitting loading of DNA polymerase. After initiation quickly degrades to an ADP-DnaA complex that is not apt for DNA replication. Binds acidic phospholipids.</text>
</comment>
<comment type="subunit">
    <text evidence="1">Oligomerizes as a right-handed, spiral filament on DNA at oriC.</text>
</comment>
<comment type="subcellular location">
    <subcellularLocation>
        <location evidence="1">Cytoplasm</location>
    </subcellularLocation>
</comment>
<comment type="domain">
    <text evidence="1">Domain I is involved in oligomerization and binding regulators, domain II is flexibile and of varying length in different bacteria, domain III forms the AAA+ region, while domain IV binds dsDNA.</text>
</comment>
<comment type="similarity">
    <text evidence="1">Belongs to the DnaA family.</text>
</comment>
<reference key="1">
    <citation type="journal article" date="2010" name="PLoS ONE">
        <title>The complete genome sequence of Cupriavidus metallidurans strain CH34, a master survivalist in harsh and anthropogenic environments.</title>
        <authorList>
            <person name="Janssen P.J."/>
            <person name="Van Houdt R."/>
            <person name="Moors H."/>
            <person name="Monsieurs P."/>
            <person name="Morin N."/>
            <person name="Michaux A."/>
            <person name="Benotmane M.A."/>
            <person name="Leys N."/>
            <person name="Vallaeys T."/>
            <person name="Lapidus A."/>
            <person name="Monchy S."/>
            <person name="Medigue C."/>
            <person name="Taghavi S."/>
            <person name="McCorkle S."/>
            <person name="Dunn J."/>
            <person name="van der Lelie D."/>
            <person name="Mergeay M."/>
        </authorList>
    </citation>
    <scope>NUCLEOTIDE SEQUENCE [LARGE SCALE GENOMIC DNA]</scope>
    <source>
        <strain>ATCC 43123 / DSM 2839 / NBRC 102507 / CH34</strain>
    </source>
</reference>
<proteinExistence type="inferred from homology"/>
<feature type="chain" id="PRO_1000048700" description="Chromosomal replication initiator protein DnaA">
    <location>
        <begin position="1"/>
        <end position="579"/>
    </location>
</feature>
<feature type="region of interest" description="Domain I, interacts with DnaA modulators" evidence="1">
    <location>
        <begin position="1"/>
        <end position="71"/>
    </location>
</feature>
<feature type="region of interest" description="Domain II" evidence="1">
    <location>
        <begin position="71"/>
        <end position="242"/>
    </location>
</feature>
<feature type="region of interest" description="Disordered" evidence="2">
    <location>
        <begin position="131"/>
        <end position="196"/>
    </location>
</feature>
<feature type="region of interest" description="Disordered" evidence="2">
    <location>
        <begin position="212"/>
        <end position="240"/>
    </location>
</feature>
<feature type="region of interest" description="Domain III, AAA+ region" evidence="1">
    <location>
        <begin position="243"/>
        <end position="459"/>
    </location>
</feature>
<feature type="region of interest" description="Domain IV, binds dsDNA" evidence="1">
    <location>
        <begin position="460"/>
        <end position="579"/>
    </location>
</feature>
<feature type="compositionally biased region" description="Low complexity" evidence="2">
    <location>
        <begin position="171"/>
        <end position="183"/>
    </location>
</feature>
<feature type="binding site" evidence="1">
    <location>
        <position position="287"/>
    </location>
    <ligand>
        <name>ATP</name>
        <dbReference type="ChEBI" id="CHEBI:30616"/>
    </ligand>
</feature>
<feature type="binding site" evidence="1">
    <location>
        <position position="289"/>
    </location>
    <ligand>
        <name>ATP</name>
        <dbReference type="ChEBI" id="CHEBI:30616"/>
    </ligand>
</feature>
<feature type="binding site" evidence="1">
    <location>
        <position position="290"/>
    </location>
    <ligand>
        <name>ATP</name>
        <dbReference type="ChEBI" id="CHEBI:30616"/>
    </ligand>
</feature>
<feature type="binding site" evidence="1">
    <location>
        <position position="291"/>
    </location>
    <ligand>
        <name>ATP</name>
        <dbReference type="ChEBI" id="CHEBI:30616"/>
    </ligand>
</feature>
<evidence type="ECO:0000255" key="1">
    <source>
        <dbReference type="HAMAP-Rule" id="MF_00377"/>
    </source>
</evidence>
<evidence type="ECO:0000256" key="2">
    <source>
        <dbReference type="SAM" id="MobiDB-lite"/>
    </source>
</evidence>
<organism>
    <name type="scientific">Cupriavidus metallidurans (strain ATCC 43123 / DSM 2839 / NBRC 102507 / CH34)</name>
    <name type="common">Ralstonia metallidurans</name>
    <dbReference type="NCBI Taxonomy" id="266264"/>
    <lineage>
        <taxon>Bacteria</taxon>
        <taxon>Pseudomonadati</taxon>
        <taxon>Pseudomonadota</taxon>
        <taxon>Betaproteobacteria</taxon>
        <taxon>Burkholderiales</taxon>
        <taxon>Burkholderiaceae</taxon>
        <taxon>Cupriavidus</taxon>
    </lineage>
</organism>
<protein>
    <recommendedName>
        <fullName evidence="1">Chromosomal replication initiator protein DnaA</fullName>
    </recommendedName>
</protein>
<dbReference type="EMBL" id="CP000352">
    <property type="protein sequence ID" value="ABF06887.1"/>
    <property type="molecule type" value="Genomic_DNA"/>
</dbReference>
<dbReference type="RefSeq" id="WP_011514936.1">
    <property type="nucleotide sequence ID" value="NC_007973.1"/>
</dbReference>
<dbReference type="SMR" id="Q1LSI9"/>
<dbReference type="STRING" id="266264.Rmet_0001"/>
<dbReference type="KEGG" id="rme:Rmet_0001"/>
<dbReference type="eggNOG" id="COG0593">
    <property type="taxonomic scope" value="Bacteria"/>
</dbReference>
<dbReference type="HOGENOM" id="CLU_026910_0_1_4"/>
<dbReference type="Proteomes" id="UP000002429">
    <property type="component" value="Chromosome"/>
</dbReference>
<dbReference type="GO" id="GO:0005737">
    <property type="term" value="C:cytoplasm"/>
    <property type="evidence" value="ECO:0007669"/>
    <property type="project" value="UniProtKB-SubCell"/>
</dbReference>
<dbReference type="GO" id="GO:0005886">
    <property type="term" value="C:plasma membrane"/>
    <property type="evidence" value="ECO:0007669"/>
    <property type="project" value="TreeGrafter"/>
</dbReference>
<dbReference type="GO" id="GO:0005524">
    <property type="term" value="F:ATP binding"/>
    <property type="evidence" value="ECO:0007669"/>
    <property type="project" value="UniProtKB-UniRule"/>
</dbReference>
<dbReference type="GO" id="GO:0016887">
    <property type="term" value="F:ATP hydrolysis activity"/>
    <property type="evidence" value="ECO:0007669"/>
    <property type="project" value="InterPro"/>
</dbReference>
<dbReference type="GO" id="GO:0003688">
    <property type="term" value="F:DNA replication origin binding"/>
    <property type="evidence" value="ECO:0007669"/>
    <property type="project" value="UniProtKB-UniRule"/>
</dbReference>
<dbReference type="GO" id="GO:0008289">
    <property type="term" value="F:lipid binding"/>
    <property type="evidence" value="ECO:0007669"/>
    <property type="project" value="UniProtKB-KW"/>
</dbReference>
<dbReference type="GO" id="GO:0006270">
    <property type="term" value="P:DNA replication initiation"/>
    <property type="evidence" value="ECO:0007669"/>
    <property type="project" value="UniProtKB-UniRule"/>
</dbReference>
<dbReference type="GO" id="GO:0006275">
    <property type="term" value="P:regulation of DNA replication"/>
    <property type="evidence" value="ECO:0007669"/>
    <property type="project" value="UniProtKB-UniRule"/>
</dbReference>
<dbReference type="CDD" id="cd00009">
    <property type="entry name" value="AAA"/>
    <property type="match status" value="1"/>
</dbReference>
<dbReference type="CDD" id="cd06571">
    <property type="entry name" value="Bac_DnaA_C"/>
    <property type="match status" value="1"/>
</dbReference>
<dbReference type="FunFam" id="1.10.8.60:FF:000003">
    <property type="entry name" value="Chromosomal replication initiator protein DnaA"/>
    <property type="match status" value="1"/>
</dbReference>
<dbReference type="FunFam" id="3.40.50.300:FF:000668">
    <property type="entry name" value="Chromosomal replication initiator protein DnaA"/>
    <property type="match status" value="1"/>
</dbReference>
<dbReference type="Gene3D" id="1.10.1750.10">
    <property type="match status" value="1"/>
</dbReference>
<dbReference type="Gene3D" id="1.10.8.60">
    <property type="match status" value="1"/>
</dbReference>
<dbReference type="Gene3D" id="3.30.300.180">
    <property type="match status" value="1"/>
</dbReference>
<dbReference type="Gene3D" id="3.40.50.300">
    <property type="entry name" value="P-loop containing nucleotide triphosphate hydrolases"/>
    <property type="match status" value="1"/>
</dbReference>
<dbReference type="HAMAP" id="MF_00377">
    <property type="entry name" value="DnaA_bact"/>
    <property type="match status" value="1"/>
</dbReference>
<dbReference type="InterPro" id="IPR003593">
    <property type="entry name" value="AAA+_ATPase"/>
</dbReference>
<dbReference type="InterPro" id="IPR001957">
    <property type="entry name" value="Chromosome_initiator_DnaA"/>
</dbReference>
<dbReference type="InterPro" id="IPR020591">
    <property type="entry name" value="Chromosome_initiator_DnaA-like"/>
</dbReference>
<dbReference type="InterPro" id="IPR018312">
    <property type="entry name" value="Chromosome_initiator_DnaA_CS"/>
</dbReference>
<dbReference type="InterPro" id="IPR013159">
    <property type="entry name" value="DnaA_C"/>
</dbReference>
<dbReference type="InterPro" id="IPR013317">
    <property type="entry name" value="DnaA_dom"/>
</dbReference>
<dbReference type="InterPro" id="IPR024633">
    <property type="entry name" value="DnaA_N_dom"/>
</dbReference>
<dbReference type="InterPro" id="IPR038454">
    <property type="entry name" value="DnaA_N_sf"/>
</dbReference>
<dbReference type="InterPro" id="IPR027417">
    <property type="entry name" value="P-loop_NTPase"/>
</dbReference>
<dbReference type="InterPro" id="IPR010921">
    <property type="entry name" value="Trp_repressor/repl_initiator"/>
</dbReference>
<dbReference type="NCBIfam" id="TIGR00362">
    <property type="entry name" value="DnaA"/>
    <property type="match status" value="1"/>
</dbReference>
<dbReference type="PANTHER" id="PTHR30050">
    <property type="entry name" value="CHROMOSOMAL REPLICATION INITIATOR PROTEIN DNAA"/>
    <property type="match status" value="1"/>
</dbReference>
<dbReference type="PANTHER" id="PTHR30050:SF2">
    <property type="entry name" value="CHROMOSOMAL REPLICATION INITIATOR PROTEIN DNAA"/>
    <property type="match status" value="1"/>
</dbReference>
<dbReference type="Pfam" id="PF00308">
    <property type="entry name" value="Bac_DnaA"/>
    <property type="match status" value="1"/>
</dbReference>
<dbReference type="Pfam" id="PF08299">
    <property type="entry name" value="Bac_DnaA_C"/>
    <property type="match status" value="1"/>
</dbReference>
<dbReference type="Pfam" id="PF11638">
    <property type="entry name" value="DnaA_N"/>
    <property type="match status" value="1"/>
</dbReference>
<dbReference type="PRINTS" id="PR00051">
    <property type="entry name" value="DNAA"/>
</dbReference>
<dbReference type="SMART" id="SM00382">
    <property type="entry name" value="AAA"/>
    <property type="match status" value="1"/>
</dbReference>
<dbReference type="SMART" id="SM00760">
    <property type="entry name" value="Bac_DnaA_C"/>
    <property type="match status" value="1"/>
</dbReference>
<dbReference type="SUPFAM" id="SSF52540">
    <property type="entry name" value="P-loop containing nucleoside triphosphate hydrolases"/>
    <property type="match status" value="1"/>
</dbReference>
<dbReference type="SUPFAM" id="SSF48295">
    <property type="entry name" value="TrpR-like"/>
    <property type="match status" value="1"/>
</dbReference>
<dbReference type="PROSITE" id="PS01008">
    <property type="entry name" value="DNAA"/>
    <property type="match status" value="1"/>
</dbReference>
<gene>
    <name evidence="1" type="primary">dnaA</name>
    <name type="ordered locus">Rmet_0001</name>
</gene>